<proteinExistence type="evidence at protein level"/>
<reference key="1">
    <citation type="journal article" date="2001" name="Biochem. J.">
        <title>Perivenous expression of the mRNA of the three hypoxia-inducible factor a-subunits HIF-1a, HIF2a and HIF3a in rat liver.</title>
        <authorList>
            <person name="Kietzmann T."/>
            <person name="Cornesse Y."/>
            <person name="Brechtel K."/>
            <person name="Modaressi S."/>
            <person name="Jungermann K."/>
        </authorList>
    </citation>
    <scope>NUCLEOTIDE SEQUENCE [MRNA]</scope>
    <scope>SUBCELLULAR LOCATION</scope>
    <scope>TISSUE SPECIFICITY</scope>
    <source>
        <tissue>Hepatocyte</tissue>
    </source>
</reference>
<reference key="2">
    <citation type="journal article" date="2003" name="FASEB J.">
        <title>Hypoxia rapidly activates HIF-3alpha mRNA expression.</title>
        <authorList>
            <person name="Heidbreder M."/>
            <person name="Froehlich F."/>
            <person name="Johren O."/>
            <person name="Dendorfer A."/>
            <person name="Qadri F."/>
            <person name="Dominiak P."/>
        </authorList>
    </citation>
    <scope>TISSUE SPECIFICITY</scope>
    <scope>INDUCTION</scope>
</reference>
<organism>
    <name type="scientific">Rattus norvegicus</name>
    <name type="common">Rat</name>
    <dbReference type="NCBI Taxonomy" id="10116"/>
    <lineage>
        <taxon>Eukaryota</taxon>
        <taxon>Metazoa</taxon>
        <taxon>Chordata</taxon>
        <taxon>Craniata</taxon>
        <taxon>Vertebrata</taxon>
        <taxon>Euteleostomi</taxon>
        <taxon>Mammalia</taxon>
        <taxon>Eutheria</taxon>
        <taxon>Euarchontoglires</taxon>
        <taxon>Glires</taxon>
        <taxon>Rodentia</taxon>
        <taxon>Myomorpha</taxon>
        <taxon>Muroidea</taxon>
        <taxon>Muridae</taxon>
        <taxon>Murinae</taxon>
        <taxon>Rattus</taxon>
    </lineage>
</organism>
<name>HIF3A_RAT</name>
<keyword id="KW-0037">Angiogenesis</keyword>
<keyword id="KW-0053">Apoptosis</keyword>
<keyword id="KW-0963">Cytoplasm</keyword>
<keyword id="KW-0217">Developmental protein</keyword>
<keyword id="KW-0379">Hydroxylation</keyword>
<keyword id="KW-1017">Isopeptide bond</keyword>
<keyword id="KW-0496">Mitochondrion</keyword>
<keyword id="KW-0539">Nucleus</keyword>
<keyword id="KW-1185">Reference proteome</keyword>
<keyword id="KW-0677">Repeat</keyword>
<keyword id="KW-0678">Repressor</keyword>
<keyword id="KW-0346">Stress response</keyword>
<keyword id="KW-0804">Transcription</keyword>
<keyword id="KW-0805">Transcription regulation</keyword>
<keyword id="KW-0832">Ubl conjugation</keyword>
<sequence>MDWDQDRSSTELRKEKSRDAARSRRSQETEVLYQLAHTLPFARGVSAHLDKASIMRLTISYLRMHRLCAAGEWNQVRKEGEPLDACYLKALEGFVMVLTAEGDMAYLSENVSKHLGLSQLELIGHSIFDFIHPCDQEELQDALTPRPSLSKKKSEAATGRHFSLRMKSTLTSRGRALNLKAATWKVLHCSGHMRAYKPPAQTSPAGSPRSEPPLQCLVLICEAIPHPASLEPPLGRGAFLSRHSLDMKFTYCDERIAEVAGYSPDDLIGCSAYEYIHALDSDAVSRSIHTLLSKGQAVTGQYRFLARTGGYLWTQTQATVVSGGRGPQSESIICVHFLISRVEENGVVLSLEQTEQHTRRPPQLGTSSKKGIPGNSLDPPAPRILAFLHPPALSEASLAADPRRFCSPDLRRLMAPILDGPPTAATPSTPQAARRPQSPLPADLPDQLAVGLENAHRLSTARKNKTMETDLDIAQDPDTPDLEMLAPYISMDDDFQLNSSEQLPKVHRRPPRTARRPRARSFHGLSPPIPEATLLPRWGSDPRLNCSSPSKGDPPTAPLTPRTRKRALAQSSEDKGLELLETKPPKRSPRLEPGSVLLPPLSLSFLLQGRQLPGNQPDPRAPLVDSHEPLGLAPSLLSLYQHEETIQSRNHFLPAAGLAQTH</sequence>
<gene>
    <name evidence="9 10" type="primary">Hif3a</name>
</gene>
<protein>
    <recommendedName>
        <fullName evidence="9 10">Hypoxia-inducible factor 3-alpha</fullName>
        <shortName>HIF-3-alpha</shortName>
        <shortName>HIF3-alpha</shortName>
    </recommendedName>
    <alternativeName>
        <fullName>HIF3-alpha-1</fullName>
    </alternativeName>
</protein>
<comment type="function">
    <text evidence="2 3">Acts as a transcriptional regulator in adaptive response to low oxygen tension. Attenuates the ability of transcription factor HIF1A, EPAS1 and the HIF1A-ARNT complex to bind to hypoxia-responsive elements (HRE) located within the enhancer/promoter of hypoxia-inducible target genes and hence inhibits HRE-driven transcriptional activation. Functions as an inhibitor of angiogenesis in hypoxic cells of the cornea. Plays a role in the development of the cardiorespiratory system. May also be involved in apoptosis. May act as a tumor suppressor.</text>
</comment>
<comment type="subunit">
    <text evidence="2 3">Interacts with ARNT, BAD, BCL2L2, EPAS1, HIF1A, MCL1 and VHL.</text>
</comment>
<comment type="subcellular location">
    <subcellularLocation>
        <location evidence="5 7">Nucleus</location>
    </subcellularLocation>
    <subcellularLocation>
        <location evidence="7">Cytoplasm</location>
    </subcellularLocation>
    <subcellularLocation>
        <location evidence="2">Nucleus speckle</location>
    </subcellularLocation>
    <subcellularLocation>
        <location evidence="2">Mitochondrion</location>
    </subcellularLocation>
    <text evidence="2 3">In the nuclei of all periportal and perivenous hepatocytes. In the distal perivenous zone, detected in the cytoplasm of the hepatocytes (PubMed:11237857). Localized in the cytoplasm and nuclei under normoxia, but increased in the nucleus under hypoxic conditions. Colocalized with HIF1A in kidney tumors. Colocalizes with BAD in the cytoplasm. Colocalizes with EPAS1 and HIF1A in the nucleus and speckles. Shuttles between the nucleus and the cytoplasm in a CRM1-dependent manner.</text>
</comment>
<comment type="tissue specificity">
    <text evidence="7 8">Expressed in the perivenous zone of the liver (PubMed:11237857). Expressed in all tissues examined during normoxia (PubMed:12824304). Expressed in brain and lung. Expressed in periportal and perivenous hepatocytes and in endothelial cells of the central vein (at protein level) (PubMed:11237857). Highest expression seen in the cerebral cortex, hippocampus, and lung. Low expression in myocardial tissue and liver (PubMed:12824304).</text>
</comment>
<comment type="induction">
    <text evidence="8">Up-regulated by hypoxia.</text>
</comment>
<comment type="PTM">
    <text evidence="3">In normoxia, hydroxylated on Pro-487 in the oxygen-dependent degradation domain (ODD) by PHD. The hydroxylated proline promotes interaction with VHL, initiating rapid ubiquitination and subsequent proteasomal degradation.</text>
</comment>
<comment type="PTM">
    <text evidence="3">Ubiquitinated; ubiquitination occurs in a VHL- and oxygen-dependent pathway and subsequently targeted for proteasomal degradation.</text>
</comment>
<accession>Q9JHS2</accession>
<feature type="chain" id="PRO_0000284416" description="Hypoxia-inducible factor 3-alpha">
    <location>
        <begin position="1"/>
        <end position="662"/>
    </location>
</feature>
<feature type="domain" description="bHLH" evidence="5">
    <location>
        <begin position="12"/>
        <end position="65"/>
    </location>
</feature>
<feature type="domain" description="PAS 1" evidence="4">
    <location>
        <begin position="80"/>
        <end position="150"/>
    </location>
</feature>
<feature type="domain" description="PAS 2" evidence="4">
    <location>
        <begin position="225"/>
        <end position="295"/>
    </location>
</feature>
<feature type="region of interest" description="Disordered" evidence="6">
    <location>
        <begin position="1"/>
        <end position="25"/>
    </location>
</feature>
<feature type="region of interest" description="Nuclear localization signal" evidence="2">
    <location>
        <begin position="75"/>
        <end position="98"/>
    </location>
</feature>
<feature type="region of interest" description="Nuclear export signal" evidence="2">
    <location>
        <begin position="228"/>
        <end position="272"/>
    </location>
</feature>
<feature type="region of interest" description="Disordered" evidence="6">
    <location>
        <begin position="352"/>
        <end position="379"/>
    </location>
</feature>
<feature type="region of interest" description="Disordered" evidence="6">
    <location>
        <begin position="417"/>
        <end position="445"/>
    </location>
</feature>
<feature type="region of interest" description="ODD">
    <location>
        <begin position="448"/>
        <end position="581"/>
    </location>
</feature>
<feature type="region of interest" description="NTAD">
    <location>
        <begin position="450"/>
        <end position="501"/>
    </location>
</feature>
<feature type="region of interest" description="Disordered" evidence="6">
    <location>
        <begin position="459"/>
        <end position="480"/>
    </location>
</feature>
<feature type="region of interest" description="Disordered" evidence="6">
    <location>
        <begin position="500"/>
        <end position="595"/>
    </location>
</feature>
<feature type="short sequence motif" description="LRRLL">
    <location>
        <begin position="410"/>
        <end position="413"/>
    </location>
</feature>
<feature type="short sequence motif" description="LAPYISMD">
    <location>
        <begin position="485"/>
        <end position="492"/>
    </location>
</feature>
<feature type="compositionally biased region" description="Low complexity" evidence="6">
    <location>
        <begin position="421"/>
        <end position="433"/>
    </location>
</feature>
<feature type="compositionally biased region" description="Acidic residues" evidence="6">
    <location>
        <begin position="469"/>
        <end position="480"/>
    </location>
</feature>
<feature type="compositionally biased region" description="Basic residues" evidence="6">
    <location>
        <begin position="505"/>
        <end position="521"/>
    </location>
</feature>
<feature type="compositionally biased region" description="Basic and acidic residues" evidence="6">
    <location>
        <begin position="572"/>
        <end position="584"/>
    </location>
</feature>
<feature type="modified residue" description="4-hydroxyproline" evidence="1">
    <location>
        <position position="487"/>
    </location>
</feature>
<feature type="cross-link" description="Glycyl lysine isopeptide (Lys-Gly) (interchain with G-Cter in ubiquitin)" evidence="3">
    <location>
        <position position="463"/>
    </location>
</feature>
<feature type="cross-link" description="Glycyl lysine isopeptide (Lys-Gly) (interchain with G-Cter in ubiquitin)" evidence="3">
    <location>
        <position position="565"/>
    </location>
</feature>
<dbReference type="EMBL" id="AJ277827">
    <property type="protein sequence ID" value="CAB96611.1"/>
    <property type="molecule type" value="mRNA"/>
</dbReference>
<dbReference type="RefSeq" id="NP_071973.1">
    <property type="nucleotide sequence ID" value="NM_022528.2"/>
</dbReference>
<dbReference type="SMR" id="Q9JHS2"/>
<dbReference type="FunCoup" id="Q9JHS2">
    <property type="interactions" value="45"/>
</dbReference>
<dbReference type="STRING" id="10116.ENSRNOP00000023490"/>
<dbReference type="GlyGen" id="Q9JHS2">
    <property type="glycosylation" value="2 sites"/>
</dbReference>
<dbReference type="iPTMnet" id="Q9JHS2"/>
<dbReference type="PhosphoSitePlus" id="Q9JHS2"/>
<dbReference type="PaxDb" id="10116-ENSRNOP00000023490"/>
<dbReference type="GeneID" id="64345"/>
<dbReference type="KEGG" id="rno:64345"/>
<dbReference type="UCSC" id="RGD:70332">
    <property type="organism name" value="rat"/>
</dbReference>
<dbReference type="AGR" id="RGD:70332"/>
<dbReference type="CTD" id="64344"/>
<dbReference type="RGD" id="70332">
    <property type="gene designation" value="Hif3a"/>
</dbReference>
<dbReference type="eggNOG" id="KOG3558">
    <property type="taxonomic scope" value="Eukaryota"/>
</dbReference>
<dbReference type="InParanoid" id="Q9JHS2"/>
<dbReference type="Reactome" id="R-RNO-1234158">
    <property type="pathway name" value="Regulation of gene expression by Hypoxia-inducible Factor"/>
</dbReference>
<dbReference type="Reactome" id="R-RNO-1234176">
    <property type="pathway name" value="Oxygen-dependent proline hydroxylation of Hypoxia-inducible Factor Alpha"/>
</dbReference>
<dbReference type="Reactome" id="R-RNO-8951664">
    <property type="pathway name" value="Neddylation"/>
</dbReference>
<dbReference type="PRO" id="PR:Q9JHS2"/>
<dbReference type="Proteomes" id="UP000002494">
    <property type="component" value="Unplaced"/>
</dbReference>
<dbReference type="GO" id="GO:0000785">
    <property type="term" value="C:chromatin"/>
    <property type="evidence" value="ECO:0000266"/>
    <property type="project" value="RGD"/>
</dbReference>
<dbReference type="GO" id="GO:0005739">
    <property type="term" value="C:mitochondrion"/>
    <property type="evidence" value="ECO:0007669"/>
    <property type="project" value="UniProtKB-SubCell"/>
</dbReference>
<dbReference type="GO" id="GO:0016607">
    <property type="term" value="C:nuclear speck"/>
    <property type="evidence" value="ECO:0007669"/>
    <property type="project" value="UniProtKB-SubCell"/>
</dbReference>
<dbReference type="GO" id="GO:0003677">
    <property type="term" value="F:DNA binding"/>
    <property type="evidence" value="ECO:0000266"/>
    <property type="project" value="RGD"/>
</dbReference>
<dbReference type="GO" id="GO:0003700">
    <property type="term" value="F:DNA-binding transcription factor activity"/>
    <property type="evidence" value="ECO:0000314"/>
    <property type="project" value="RGD"/>
</dbReference>
<dbReference type="GO" id="GO:0000981">
    <property type="term" value="F:DNA-binding transcription factor activity, RNA polymerase II-specific"/>
    <property type="evidence" value="ECO:0000250"/>
    <property type="project" value="GO_Central"/>
</dbReference>
<dbReference type="GO" id="GO:0046983">
    <property type="term" value="F:protein dimerization activity"/>
    <property type="evidence" value="ECO:0007669"/>
    <property type="project" value="InterPro"/>
</dbReference>
<dbReference type="GO" id="GO:0000978">
    <property type="term" value="F:RNA polymerase II cis-regulatory region sequence-specific DNA binding"/>
    <property type="evidence" value="ECO:0000266"/>
    <property type="project" value="RGD"/>
</dbReference>
<dbReference type="GO" id="GO:0000977">
    <property type="term" value="F:RNA polymerase II transcription regulatory region sequence-specific DNA binding"/>
    <property type="evidence" value="ECO:0000318"/>
    <property type="project" value="GO_Central"/>
</dbReference>
<dbReference type="GO" id="GO:0001525">
    <property type="term" value="P:angiogenesis"/>
    <property type="evidence" value="ECO:0007669"/>
    <property type="project" value="UniProtKB-KW"/>
</dbReference>
<dbReference type="GO" id="GO:0006915">
    <property type="term" value="P:apoptotic process"/>
    <property type="evidence" value="ECO:0007669"/>
    <property type="project" value="UniProtKB-KW"/>
</dbReference>
<dbReference type="GO" id="GO:0071456">
    <property type="term" value="P:cellular response to hypoxia"/>
    <property type="evidence" value="ECO:0000318"/>
    <property type="project" value="GO_Central"/>
</dbReference>
<dbReference type="GO" id="GO:0045944">
    <property type="term" value="P:positive regulation of transcription by RNA polymerase II"/>
    <property type="evidence" value="ECO:0000314"/>
    <property type="project" value="RGD"/>
</dbReference>
<dbReference type="GO" id="GO:0006357">
    <property type="term" value="P:regulation of transcription by RNA polymerase II"/>
    <property type="evidence" value="ECO:0000318"/>
    <property type="project" value="GO_Central"/>
</dbReference>
<dbReference type="GO" id="GO:0001666">
    <property type="term" value="P:response to hypoxia"/>
    <property type="evidence" value="ECO:0000266"/>
    <property type="project" value="RGD"/>
</dbReference>
<dbReference type="GO" id="GO:0006366">
    <property type="term" value="P:transcription by RNA polymerase II"/>
    <property type="evidence" value="ECO:0000266"/>
    <property type="project" value="RGD"/>
</dbReference>
<dbReference type="CDD" id="cd19729">
    <property type="entry name" value="bHLH-PAS_HIF3a_PASD7"/>
    <property type="match status" value="1"/>
</dbReference>
<dbReference type="CDD" id="cd00130">
    <property type="entry name" value="PAS"/>
    <property type="match status" value="2"/>
</dbReference>
<dbReference type="FunFam" id="3.30.450.20:FF:000005">
    <property type="entry name" value="Hypoxia-inducible factor 1 subunit alpha"/>
    <property type="match status" value="1"/>
</dbReference>
<dbReference type="FunFam" id="3.30.450.20:FF:000042">
    <property type="entry name" value="hypoxia-inducible factor 3-alpha isoform X1"/>
    <property type="match status" value="1"/>
</dbReference>
<dbReference type="FunFam" id="4.10.280.10:FF:000076">
    <property type="entry name" value="hypoxia-inducible factor 3-alpha isoform X1"/>
    <property type="match status" value="1"/>
</dbReference>
<dbReference type="Gene3D" id="4.10.280.10">
    <property type="entry name" value="Helix-loop-helix DNA-binding domain"/>
    <property type="match status" value="1"/>
</dbReference>
<dbReference type="Gene3D" id="3.30.450.20">
    <property type="entry name" value="PAS domain"/>
    <property type="match status" value="2"/>
</dbReference>
<dbReference type="InterPro" id="IPR011598">
    <property type="entry name" value="bHLH_dom"/>
</dbReference>
<dbReference type="InterPro" id="IPR021537">
    <property type="entry name" value="HIF_alpha-like"/>
</dbReference>
<dbReference type="InterPro" id="IPR036638">
    <property type="entry name" value="HLH_DNA-bd_sf"/>
</dbReference>
<dbReference type="InterPro" id="IPR000014">
    <property type="entry name" value="PAS"/>
</dbReference>
<dbReference type="InterPro" id="IPR035965">
    <property type="entry name" value="PAS-like_dom_sf"/>
</dbReference>
<dbReference type="InterPro" id="IPR013767">
    <property type="entry name" value="PAS_fold"/>
</dbReference>
<dbReference type="NCBIfam" id="TIGR00229">
    <property type="entry name" value="sensory_box"/>
    <property type="match status" value="1"/>
</dbReference>
<dbReference type="PANTHER" id="PTHR23043">
    <property type="entry name" value="HYPOXIA-INDUCIBLE FACTOR 1 ALPHA"/>
    <property type="match status" value="1"/>
</dbReference>
<dbReference type="PANTHER" id="PTHR23043:SF18">
    <property type="entry name" value="HYPOXIA-INDUCIBLE FACTOR 3-ALPHA"/>
    <property type="match status" value="1"/>
</dbReference>
<dbReference type="Pfam" id="PF23171">
    <property type="entry name" value="bHLH_HIF1A"/>
    <property type="match status" value="1"/>
</dbReference>
<dbReference type="Pfam" id="PF11413">
    <property type="entry name" value="HIF-1"/>
    <property type="match status" value="1"/>
</dbReference>
<dbReference type="Pfam" id="PF00989">
    <property type="entry name" value="PAS"/>
    <property type="match status" value="1"/>
</dbReference>
<dbReference type="Pfam" id="PF14598">
    <property type="entry name" value="PAS_11"/>
    <property type="match status" value="1"/>
</dbReference>
<dbReference type="SMART" id="SM00353">
    <property type="entry name" value="HLH"/>
    <property type="match status" value="1"/>
</dbReference>
<dbReference type="SMART" id="SM00091">
    <property type="entry name" value="PAS"/>
    <property type="match status" value="2"/>
</dbReference>
<dbReference type="SUPFAM" id="SSF47459">
    <property type="entry name" value="HLH, helix-loop-helix DNA-binding domain"/>
    <property type="match status" value="1"/>
</dbReference>
<dbReference type="SUPFAM" id="SSF55785">
    <property type="entry name" value="PYP-like sensor domain (PAS domain)"/>
    <property type="match status" value="2"/>
</dbReference>
<dbReference type="PROSITE" id="PS50888">
    <property type="entry name" value="BHLH"/>
    <property type="match status" value="1"/>
</dbReference>
<dbReference type="PROSITE" id="PS50112">
    <property type="entry name" value="PAS"/>
    <property type="match status" value="2"/>
</dbReference>
<evidence type="ECO:0000250" key="1"/>
<evidence type="ECO:0000250" key="2">
    <source>
        <dbReference type="UniProtKB" id="Q0VBL6"/>
    </source>
</evidence>
<evidence type="ECO:0000250" key="3">
    <source>
        <dbReference type="UniProtKB" id="Q9Y2N7"/>
    </source>
</evidence>
<evidence type="ECO:0000255" key="4">
    <source>
        <dbReference type="PROSITE-ProRule" id="PRU00140"/>
    </source>
</evidence>
<evidence type="ECO:0000255" key="5">
    <source>
        <dbReference type="PROSITE-ProRule" id="PRU00981"/>
    </source>
</evidence>
<evidence type="ECO:0000256" key="6">
    <source>
        <dbReference type="SAM" id="MobiDB-lite"/>
    </source>
</evidence>
<evidence type="ECO:0000269" key="7">
    <source>
    </source>
</evidence>
<evidence type="ECO:0000269" key="8">
    <source>
    </source>
</evidence>
<evidence type="ECO:0000303" key="9">
    <source>
    </source>
</evidence>
<evidence type="ECO:0000312" key="10">
    <source>
        <dbReference type="RGD" id="70332"/>
    </source>
</evidence>